<protein>
    <recommendedName>
        <fullName evidence="1">Ribosomal RNA small subunit methyltransferase H</fullName>
        <ecNumber evidence="1">2.1.1.199</ecNumber>
    </recommendedName>
    <alternativeName>
        <fullName evidence="1">16S rRNA m(4)C1402 methyltransferase</fullName>
    </alternativeName>
    <alternativeName>
        <fullName evidence="1">rRNA (cytosine-N(4)-)-methyltransferase RsmH</fullName>
    </alternativeName>
</protein>
<comment type="function">
    <text evidence="1">Specifically methylates the N4 position of cytidine in position 1402 (C1402) of 16S rRNA.</text>
</comment>
<comment type="catalytic activity">
    <reaction evidence="1">
        <text>cytidine(1402) in 16S rRNA + S-adenosyl-L-methionine = N(4)-methylcytidine(1402) in 16S rRNA + S-adenosyl-L-homocysteine + H(+)</text>
        <dbReference type="Rhea" id="RHEA:42928"/>
        <dbReference type="Rhea" id="RHEA-COMP:10286"/>
        <dbReference type="Rhea" id="RHEA-COMP:10287"/>
        <dbReference type="ChEBI" id="CHEBI:15378"/>
        <dbReference type="ChEBI" id="CHEBI:57856"/>
        <dbReference type="ChEBI" id="CHEBI:59789"/>
        <dbReference type="ChEBI" id="CHEBI:74506"/>
        <dbReference type="ChEBI" id="CHEBI:82748"/>
        <dbReference type="EC" id="2.1.1.199"/>
    </reaction>
</comment>
<comment type="subcellular location">
    <subcellularLocation>
        <location evidence="1">Cytoplasm</location>
    </subcellularLocation>
</comment>
<comment type="similarity">
    <text evidence="1">Belongs to the methyltransferase superfamily. RsmH family.</text>
</comment>
<feature type="chain" id="PRO_0000387070" description="Ribosomal RNA small subunit methyltransferase H">
    <location>
        <begin position="1"/>
        <end position="341"/>
    </location>
</feature>
<feature type="binding site" evidence="1">
    <location>
        <begin position="47"/>
        <end position="49"/>
    </location>
    <ligand>
        <name>S-adenosyl-L-methionine</name>
        <dbReference type="ChEBI" id="CHEBI:59789"/>
    </ligand>
</feature>
<feature type="binding site" evidence="1">
    <location>
        <position position="64"/>
    </location>
    <ligand>
        <name>S-adenosyl-L-methionine</name>
        <dbReference type="ChEBI" id="CHEBI:59789"/>
    </ligand>
</feature>
<feature type="binding site" evidence="1">
    <location>
        <position position="91"/>
    </location>
    <ligand>
        <name>S-adenosyl-L-methionine</name>
        <dbReference type="ChEBI" id="CHEBI:59789"/>
    </ligand>
</feature>
<feature type="binding site" evidence="1">
    <location>
        <position position="109"/>
    </location>
    <ligand>
        <name>S-adenosyl-L-methionine</name>
        <dbReference type="ChEBI" id="CHEBI:59789"/>
    </ligand>
</feature>
<feature type="binding site" evidence="1">
    <location>
        <position position="116"/>
    </location>
    <ligand>
        <name>S-adenosyl-L-methionine</name>
        <dbReference type="ChEBI" id="CHEBI:59789"/>
    </ligand>
</feature>
<gene>
    <name evidence="1" type="primary">rsmH</name>
    <name type="synonym">mraW</name>
    <name type="ordered locus">Rleg2_2602</name>
</gene>
<keyword id="KW-0963">Cytoplasm</keyword>
<keyword id="KW-0489">Methyltransferase</keyword>
<keyword id="KW-1185">Reference proteome</keyword>
<keyword id="KW-0698">rRNA processing</keyword>
<keyword id="KW-0949">S-adenosyl-L-methionine</keyword>
<keyword id="KW-0808">Transferase</keyword>
<evidence type="ECO:0000255" key="1">
    <source>
        <dbReference type="HAMAP-Rule" id="MF_01007"/>
    </source>
</evidence>
<proteinExistence type="inferred from homology"/>
<accession>B5ZWK2</accession>
<sequence>MVANPGGGSTDAGGGPVRHIPVLLDEVLSALAPAPGKLILDGTFGAGGYSSAILAAGAEVIALDRDPTAIASGQAMVAAHGGRLKLVHSQFSHLADHAPQGGLDGVVLDIGVSSMQIDEAERGFSFQKNGPLDMRMSAAGVSAADVVNRAKVADLIRIFHFLGEESQAPRIAHAIEKRREEKPFETTRDLAGLIELVTPRKMKDKIHPATRVFQALRIFVNDELGELAQALFAAEAALKPGGRLVVVTFHSLEDRIVKKFFSDRAGKASGSRHLPVAHERAATFAAIGKPMVSASEAEAEINPRARSAKLRAGLRTEAAAEAADMSLFGFPNLASLGKLGG</sequence>
<reference key="1">
    <citation type="journal article" date="2010" name="Stand. Genomic Sci.">
        <title>Complete genome sequence of Rhizobium leguminosarum bv trifolii strain WSM2304, an effective microsymbiont of the South American clover Trifolium polymorphum.</title>
        <authorList>
            <person name="Reeve W."/>
            <person name="O'Hara G."/>
            <person name="Chain P."/>
            <person name="Ardley J."/>
            <person name="Brau L."/>
            <person name="Nandesena K."/>
            <person name="Tiwari R."/>
            <person name="Malfatti S."/>
            <person name="Kiss H."/>
            <person name="Lapidus A."/>
            <person name="Copeland A."/>
            <person name="Nolan M."/>
            <person name="Land M."/>
            <person name="Ivanova N."/>
            <person name="Mavromatis K."/>
            <person name="Markowitz V."/>
            <person name="Kyrpides N."/>
            <person name="Melino V."/>
            <person name="Denton M."/>
            <person name="Yates R."/>
            <person name="Howieson J."/>
        </authorList>
    </citation>
    <scope>NUCLEOTIDE SEQUENCE [LARGE SCALE GENOMIC DNA]</scope>
    <source>
        <strain>WSM2304</strain>
    </source>
</reference>
<organism>
    <name type="scientific">Rhizobium leguminosarum bv. trifolii (strain WSM2304)</name>
    <dbReference type="NCBI Taxonomy" id="395492"/>
    <lineage>
        <taxon>Bacteria</taxon>
        <taxon>Pseudomonadati</taxon>
        <taxon>Pseudomonadota</taxon>
        <taxon>Alphaproteobacteria</taxon>
        <taxon>Hyphomicrobiales</taxon>
        <taxon>Rhizobiaceae</taxon>
        <taxon>Rhizobium/Agrobacterium group</taxon>
        <taxon>Rhizobium</taxon>
    </lineage>
</organism>
<name>RSMH_RHILW</name>
<dbReference type="EC" id="2.1.1.199" evidence="1"/>
<dbReference type="EMBL" id="CP001191">
    <property type="protein sequence ID" value="ACI55873.1"/>
    <property type="molecule type" value="Genomic_DNA"/>
</dbReference>
<dbReference type="RefSeq" id="WP_012558374.1">
    <property type="nucleotide sequence ID" value="NC_011369.1"/>
</dbReference>
<dbReference type="SMR" id="B5ZWK2"/>
<dbReference type="STRING" id="395492.Rleg2_2602"/>
<dbReference type="KEGG" id="rlt:Rleg2_2602"/>
<dbReference type="eggNOG" id="COG0275">
    <property type="taxonomic scope" value="Bacteria"/>
</dbReference>
<dbReference type="HOGENOM" id="CLU_038422_1_1_5"/>
<dbReference type="Proteomes" id="UP000008330">
    <property type="component" value="Chromosome"/>
</dbReference>
<dbReference type="GO" id="GO:0005737">
    <property type="term" value="C:cytoplasm"/>
    <property type="evidence" value="ECO:0007669"/>
    <property type="project" value="UniProtKB-SubCell"/>
</dbReference>
<dbReference type="GO" id="GO:0071424">
    <property type="term" value="F:rRNA (cytosine-N4-)-methyltransferase activity"/>
    <property type="evidence" value="ECO:0007669"/>
    <property type="project" value="UniProtKB-UniRule"/>
</dbReference>
<dbReference type="GO" id="GO:0070475">
    <property type="term" value="P:rRNA base methylation"/>
    <property type="evidence" value="ECO:0007669"/>
    <property type="project" value="UniProtKB-UniRule"/>
</dbReference>
<dbReference type="Gene3D" id="1.10.150.170">
    <property type="entry name" value="Putative methyltransferase TM0872, insert domain"/>
    <property type="match status" value="1"/>
</dbReference>
<dbReference type="Gene3D" id="3.40.50.150">
    <property type="entry name" value="Vaccinia Virus protein VP39"/>
    <property type="match status" value="1"/>
</dbReference>
<dbReference type="HAMAP" id="MF_01007">
    <property type="entry name" value="16SrRNA_methyltr_H"/>
    <property type="match status" value="1"/>
</dbReference>
<dbReference type="InterPro" id="IPR002903">
    <property type="entry name" value="RsmH"/>
</dbReference>
<dbReference type="InterPro" id="IPR023397">
    <property type="entry name" value="SAM-dep_MeTrfase_MraW_recog"/>
</dbReference>
<dbReference type="InterPro" id="IPR029063">
    <property type="entry name" value="SAM-dependent_MTases_sf"/>
</dbReference>
<dbReference type="NCBIfam" id="TIGR00006">
    <property type="entry name" value="16S rRNA (cytosine(1402)-N(4))-methyltransferase RsmH"/>
    <property type="match status" value="1"/>
</dbReference>
<dbReference type="PANTHER" id="PTHR11265:SF0">
    <property type="entry name" value="12S RRNA N4-METHYLCYTIDINE METHYLTRANSFERASE"/>
    <property type="match status" value="1"/>
</dbReference>
<dbReference type="PANTHER" id="PTHR11265">
    <property type="entry name" value="S-ADENOSYL-METHYLTRANSFERASE MRAW"/>
    <property type="match status" value="1"/>
</dbReference>
<dbReference type="Pfam" id="PF01795">
    <property type="entry name" value="Methyltransf_5"/>
    <property type="match status" value="1"/>
</dbReference>
<dbReference type="PIRSF" id="PIRSF004486">
    <property type="entry name" value="MraW"/>
    <property type="match status" value="1"/>
</dbReference>
<dbReference type="SUPFAM" id="SSF81799">
    <property type="entry name" value="Putative methyltransferase TM0872, insert domain"/>
    <property type="match status" value="1"/>
</dbReference>
<dbReference type="SUPFAM" id="SSF53335">
    <property type="entry name" value="S-adenosyl-L-methionine-dependent methyltransferases"/>
    <property type="match status" value="1"/>
</dbReference>